<protein>
    <recommendedName>
        <fullName evidence="1">Large ribosomal subunit protein uL23</fullName>
    </recommendedName>
    <alternativeName>
        <fullName evidence="2">50S ribosomal protein L23</fullName>
    </alternativeName>
</protein>
<proteinExistence type="inferred from homology"/>
<gene>
    <name evidence="1" type="primary">rpl23</name>
    <name type="ordered locus">SSO6401</name>
</gene>
<organism>
    <name type="scientific">Saccharolobus solfataricus (strain ATCC 35092 / DSM 1617 / JCM 11322 / P2)</name>
    <name type="common">Sulfolobus solfataricus</name>
    <dbReference type="NCBI Taxonomy" id="273057"/>
    <lineage>
        <taxon>Archaea</taxon>
        <taxon>Thermoproteota</taxon>
        <taxon>Thermoprotei</taxon>
        <taxon>Sulfolobales</taxon>
        <taxon>Sulfolobaceae</taxon>
        <taxon>Saccharolobus</taxon>
    </lineage>
</organism>
<accession>Q97ZQ4</accession>
<comment type="function">
    <text evidence="1">Binds to 23S rRNA. One of the proteins that surrounds the polypeptide exit tunnel on the outside of the ribosome.</text>
</comment>
<comment type="subunit">
    <text evidence="1">Part of the 50S ribosomal subunit. Contacts protein L29.</text>
</comment>
<comment type="similarity">
    <text evidence="1">Belongs to the universal ribosomal protein uL23 family.</text>
</comment>
<name>RL23_SACS2</name>
<evidence type="ECO:0000255" key="1">
    <source>
        <dbReference type="HAMAP-Rule" id="MF_01369"/>
    </source>
</evidence>
<evidence type="ECO:0000305" key="2"/>
<reference key="1">
    <citation type="journal article" date="2001" name="Proc. Natl. Acad. Sci. U.S.A.">
        <title>The complete genome of the crenarchaeon Sulfolobus solfataricus P2.</title>
        <authorList>
            <person name="She Q."/>
            <person name="Singh R.K."/>
            <person name="Confalonieri F."/>
            <person name="Zivanovic Y."/>
            <person name="Allard G."/>
            <person name="Awayez M.J."/>
            <person name="Chan-Weiher C.C.-Y."/>
            <person name="Clausen I.G."/>
            <person name="Curtis B.A."/>
            <person name="De Moors A."/>
            <person name="Erauso G."/>
            <person name="Fletcher C."/>
            <person name="Gordon P.M.K."/>
            <person name="Heikamp-de Jong I."/>
            <person name="Jeffries A.C."/>
            <person name="Kozera C.J."/>
            <person name="Medina N."/>
            <person name="Peng X."/>
            <person name="Thi-Ngoc H.P."/>
            <person name="Redder P."/>
            <person name="Schenk M.E."/>
            <person name="Theriault C."/>
            <person name="Tolstrup N."/>
            <person name="Charlebois R.L."/>
            <person name="Doolittle W.F."/>
            <person name="Duguet M."/>
            <person name="Gaasterland T."/>
            <person name="Garrett R.A."/>
            <person name="Ragan M.A."/>
            <person name="Sensen C.W."/>
            <person name="Van der Oost J."/>
        </authorList>
    </citation>
    <scope>NUCLEOTIDE SEQUENCE [LARGE SCALE GENOMIC DNA]</scope>
    <source>
        <strain>ATCC 35092 / DSM 1617 / JCM 11322 / P2</strain>
    </source>
</reference>
<dbReference type="EMBL" id="AE006641">
    <property type="protein sequence ID" value="AAK41016.1"/>
    <property type="molecule type" value="Genomic_DNA"/>
</dbReference>
<dbReference type="PIR" id="A99220">
    <property type="entry name" value="A99220"/>
</dbReference>
<dbReference type="RefSeq" id="WP_009991280.1">
    <property type="nucleotide sequence ID" value="NC_002754.1"/>
</dbReference>
<dbReference type="SMR" id="Q97ZQ4"/>
<dbReference type="FunCoup" id="Q97ZQ4">
    <property type="interactions" value="180"/>
</dbReference>
<dbReference type="STRING" id="273057.SSO6401"/>
<dbReference type="PaxDb" id="273057-SSO6401"/>
<dbReference type="EnsemblBacteria" id="AAK41016">
    <property type="protein sequence ID" value="AAK41016"/>
    <property type="gene ID" value="SSO6401"/>
</dbReference>
<dbReference type="KEGG" id="sso:SSO6401"/>
<dbReference type="PATRIC" id="fig|273057.12.peg.716"/>
<dbReference type="eggNOG" id="arCOG04072">
    <property type="taxonomic scope" value="Archaea"/>
</dbReference>
<dbReference type="HOGENOM" id="CLU_037562_4_2_2"/>
<dbReference type="InParanoid" id="Q97ZQ4"/>
<dbReference type="PhylomeDB" id="Q97ZQ4"/>
<dbReference type="Proteomes" id="UP000001974">
    <property type="component" value="Chromosome"/>
</dbReference>
<dbReference type="GO" id="GO:0022625">
    <property type="term" value="C:cytosolic large ribosomal subunit"/>
    <property type="evidence" value="ECO:0000318"/>
    <property type="project" value="GO_Central"/>
</dbReference>
<dbReference type="GO" id="GO:0019843">
    <property type="term" value="F:rRNA binding"/>
    <property type="evidence" value="ECO:0007669"/>
    <property type="project" value="UniProtKB-UniRule"/>
</dbReference>
<dbReference type="GO" id="GO:0003735">
    <property type="term" value="F:structural constituent of ribosome"/>
    <property type="evidence" value="ECO:0000318"/>
    <property type="project" value="GO_Central"/>
</dbReference>
<dbReference type="GO" id="GO:0006412">
    <property type="term" value="P:translation"/>
    <property type="evidence" value="ECO:0007669"/>
    <property type="project" value="UniProtKB-UniRule"/>
</dbReference>
<dbReference type="FunFam" id="3.30.70.330:FF:001084">
    <property type="entry name" value="50S ribosomal protein L23"/>
    <property type="match status" value="1"/>
</dbReference>
<dbReference type="Gene3D" id="3.30.70.330">
    <property type="match status" value="1"/>
</dbReference>
<dbReference type="HAMAP" id="MF_01369_A">
    <property type="entry name" value="Ribosomal_uL23_A"/>
    <property type="match status" value="1"/>
</dbReference>
<dbReference type="InterPro" id="IPR012677">
    <property type="entry name" value="Nucleotide-bd_a/b_plait_sf"/>
</dbReference>
<dbReference type="InterPro" id="IPR019985">
    <property type="entry name" value="Ribosomal_uL23"/>
</dbReference>
<dbReference type="InterPro" id="IPR013025">
    <property type="entry name" value="Ribosomal_uL23-like"/>
</dbReference>
<dbReference type="InterPro" id="IPR012678">
    <property type="entry name" value="Ribosomal_uL23/eL15/eS24_sf"/>
</dbReference>
<dbReference type="InterPro" id="IPR001014">
    <property type="entry name" value="Ribosomal_uL23_CS"/>
</dbReference>
<dbReference type="NCBIfam" id="NF011118">
    <property type="entry name" value="PRK14548.1"/>
    <property type="match status" value="1"/>
</dbReference>
<dbReference type="NCBIfam" id="TIGR03636">
    <property type="entry name" value="uL23_arch"/>
    <property type="match status" value="1"/>
</dbReference>
<dbReference type="PANTHER" id="PTHR11620">
    <property type="entry name" value="60S RIBOSOMAL PROTEIN L23A"/>
    <property type="match status" value="1"/>
</dbReference>
<dbReference type="Pfam" id="PF00276">
    <property type="entry name" value="Ribosomal_L23"/>
    <property type="match status" value="1"/>
</dbReference>
<dbReference type="SUPFAM" id="SSF54189">
    <property type="entry name" value="Ribosomal proteins S24e, L23 and L15e"/>
    <property type="match status" value="1"/>
</dbReference>
<dbReference type="PROSITE" id="PS00050">
    <property type="entry name" value="RIBOSOMAL_L23"/>
    <property type="match status" value="1"/>
</dbReference>
<keyword id="KW-1185">Reference proteome</keyword>
<keyword id="KW-0687">Ribonucleoprotein</keyword>
<keyword id="KW-0689">Ribosomal protein</keyword>
<keyword id="KW-0694">RNA-binding</keyword>
<keyword id="KW-0699">rRNA-binding</keyword>
<sequence length="81" mass="9127">MIQMALATEKALKLIESYNTLTLIVDKSDTKDDIKKSVERLFNVKVVKVNVVITPQGYKKAYVKLAPEYKASDIAHKLGIF</sequence>
<feature type="chain" id="PRO_0000272956" description="Large ribosomal subunit protein uL23">
    <location>
        <begin position="1"/>
        <end position="81"/>
    </location>
</feature>